<comment type="subcellular location">
    <subcellularLocation>
        <location evidence="4">Membrane</location>
        <topology evidence="4">Multi-pass membrane protein</topology>
    </subcellularLocation>
</comment>
<comment type="disruption phenotype">
    <text evidence="3">No visible phenotype.</text>
</comment>
<comment type="similarity">
    <text evidence="4">Belongs to the CLPTM1 family.</text>
</comment>
<keyword id="KW-0472">Membrane</keyword>
<keyword id="KW-1185">Reference proteome</keyword>
<keyword id="KW-0812">Transmembrane</keyword>
<keyword id="KW-1133">Transmembrane helix</keyword>
<dbReference type="EMBL" id="AAFI02000050">
    <property type="protein sequence ID" value="EAL65887.1"/>
    <property type="molecule type" value="Genomic_DNA"/>
</dbReference>
<dbReference type="RefSeq" id="XP_639245.1">
    <property type="nucleotide sequence ID" value="XM_634153.1"/>
</dbReference>
<dbReference type="FunCoup" id="Q54RJ1">
    <property type="interactions" value="1001"/>
</dbReference>
<dbReference type="STRING" id="44689.Q54RJ1"/>
<dbReference type="PaxDb" id="44689-DDB0229859"/>
<dbReference type="EnsemblProtists" id="EAL65887">
    <property type="protein sequence ID" value="EAL65887"/>
    <property type="gene ID" value="DDB_G0283115"/>
</dbReference>
<dbReference type="GeneID" id="8623931"/>
<dbReference type="KEGG" id="ddi:DDB_G0283115"/>
<dbReference type="dictyBase" id="DDB_G0283115">
    <property type="gene designation" value="cnrB"/>
</dbReference>
<dbReference type="VEuPathDB" id="AmoebaDB:DDB_G0283115"/>
<dbReference type="eggNOG" id="KOG2489">
    <property type="taxonomic scope" value="Eukaryota"/>
</dbReference>
<dbReference type="HOGENOM" id="CLU_019907_3_1_1"/>
<dbReference type="InParanoid" id="Q54RJ1"/>
<dbReference type="OMA" id="TLWAHFY"/>
<dbReference type="PhylomeDB" id="Q54RJ1"/>
<dbReference type="PRO" id="PR:Q54RJ1"/>
<dbReference type="Proteomes" id="UP000002195">
    <property type="component" value="Chromosome 4"/>
</dbReference>
<dbReference type="GO" id="GO:0012505">
    <property type="term" value="C:endomembrane system"/>
    <property type="evidence" value="ECO:0000318"/>
    <property type="project" value="GO_Central"/>
</dbReference>
<dbReference type="GO" id="GO:0016020">
    <property type="term" value="C:membrane"/>
    <property type="evidence" value="ECO:0000318"/>
    <property type="project" value="GO_Central"/>
</dbReference>
<dbReference type="InterPro" id="IPR008429">
    <property type="entry name" value="CLPTM1"/>
</dbReference>
<dbReference type="PANTHER" id="PTHR21347">
    <property type="entry name" value="CLEFT LIP AND PALATE ASSOCIATED TRANSMEMBRANE PROTEIN-RELATED"/>
    <property type="match status" value="1"/>
</dbReference>
<dbReference type="PANTHER" id="PTHR21347:SF0">
    <property type="entry name" value="LIPID SCRAMBLASE CLPTM1L"/>
    <property type="match status" value="1"/>
</dbReference>
<dbReference type="Pfam" id="PF05602">
    <property type="entry name" value="CLPTM1"/>
    <property type="match status" value="1"/>
</dbReference>
<evidence type="ECO:0000255" key="1"/>
<evidence type="ECO:0000256" key="2">
    <source>
        <dbReference type="SAM" id="MobiDB-lite"/>
    </source>
</evidence>
<evidence type="ECO:0000269" key="3">
    <source>
    </source>
</evidence>
<evidence type="ECO:0000305" key="4"/>
<protein>
    <recommendedName>
        <fullName>CLPTM1-like membrane protein cnrB</fullName>
    </recommendedName>
</protein>
<name>CNRB_DICDI</name>
<proteinExistence type="inferred from homology"/>
<feature type="chain" id="PRO_0000331305" description="CLPTM1-like membrane protein cnrB">
    <location>
        <begin position="1"/>
        <end position="619"/>
    </location>
</feature>
<feature type="transmembrane region" description="Helical" evidence="1">
    <location>
        <begin position="26"/>
        <end position="46"/>
    </location>
</feature>
<feature type="transmembrane region" description="Helical" evidence="1">
    <location>
        <begin position="324"/>
        <end position="344"/>
    </location>
</feature>
<feature type="transmembrane region" description="Helical" evidence="1">
    <location>
        <begin position="360"/>
        <end position="380"/>
    </location>
</feature>
<feature type="transmembrane region" description="Helical" evidence="1">
    <location>
        <begin position="384"/>
        <end position="404"/>
    </location>
</feature>
<feature type="transmembrane region" description="Helical" evidence="1">
    <location>
        <begin position="445"/>
        <end position="465"/>
    </location>
</feature>
<feature type="transmembrane region" description="Helical" evidence="1">
    <location>
        <begin position="474"/>
        <end position="496"/>
    </location>
</feature>
<feature type="region of interest" description="Disordered" evidence="2">
    <location>
        <begin position="1"/>
        <end position="21"/>
    </location>
</feature>
<feature type="region of interest" description="Disordered" evidence="2">
    <location>
        <begin position="566"/>
        <end position="619"/>
    </location>
</feature>
<feature type="compositionally biased region" description="Low complexity" evidence="2">
    <location>
        <begin position="9"/>
        <end position="21"/>
    </location>
</feature>
<feature type="compositionally biased region" description="Basic and acidic residues" evidence="2">
    <location>
        <begin position="574"/>
        <end position="590"/>
    </location>
</feature>
<feature type="compositionally biased region" description="Acidic residues" evidence="2">
    <location>
        <begin position="591"/>
        <end position="605"/>
    </location>
</feature>
<sequence>MNNQGGAVAANGQRPQAQQQQQQGGIMGIISTLIRFMAIYYIASFAFSKFLGTGNNNNNGGVVLNNNNGTTNTSIPSNSVRLANSWPEGIEFNMKVYLSTSNETVGDWLVWEQDKLSYDWKDSNTIPTKNITFDTTPYLQNNGSLFAHIITSRRAYLNQPKSQLHKVHPLIVYLPKPKPKGKNLLEEKSKDEPEVEYDPTELISYWKPTLSLHLIVDHTIYPPDSIPKEIVSYFNITNGFYSPIIYCNEFWLYREHLKPVNETVKQLSIEINYSSMGLFKWQLQIQMQKSLDMQESFGGGGNSAMGGASVGDEFKRMLTDNDPWILGLTLIVSVLHTIFEFLAFKNDIQFWKNNKSMEGLSVKTITLNCVCMGIIFLYLLDNETSYMILASSGFGFLVEFWKLGKAMTIKITWMTSLPLPKRIEFINKDEYMSKTKQYDDMAMKYLSWLLFPLVIGTSIYSLYYHEHKSWYSWVVSSLVRTVYTFEFIMMTPQLFINYKLKSVSHLPWRVFMYRALNTFIDDLFAFIIKMPLLHRLSCLRDDIIFIVYLYQRWIYPVDKKRSHYGSEEAEEVQQQDKKEIKEKVEEREEEKQEEEEEEKEKEEESTSSSKVTKRKTKKV</sequence>
<reference key="1">
    <citation type="journal article" date="2005" name="Nature">
        <title>The genome of the social amoeba Dictyostelium discoideum.</title>
        <authorList>
            <person name="Eichinger L."/>
            <person name="Pachebat J.A."/>
            <person name="Gloeckner G."/>
            <person name="Rajandream M.A."/>
            <person name="Sucgang R."/>
            <person name="Berriman M."/>
            <person name="Song J."/>
            <person name="Olsen R."/>
            <person name="Szafranski K."/>
            <person name="Xu Q."/>
            <person name="Tunggal B."/>
            <person name="Kummerfeld S."/>
            <person name="Madera M."/>
            <person name="Konfortov B.A."/>
            <person name="Rivero F."/>
            <person name="Bankier A.T."/>
            <person name="Lehmann R."/>
            <person name="Hamlin N."/>
            <person name="Davies R."/>
            <person name="Gaudet P."/>
            <person name="Fey P."/>
            <person name="Pilcher K."/>
            <person name="Chen G."/>
            <person name="Saunders D."/>
            <person name="Sodergren E.J."/>
            <person name="Davis P."/>
            <person name="Kerhornou A."/>
            <person name="Nie X."/>
            <person name="Hall N."/>
            <person name="Anjard C."/>
            <person name="Hemphill L."/>
            <person name="Bason N."/>
            <person name="Farbrother P."/>
            <person name="Desany B."/>
            <person name="Just E."/>
            <person name="Morio T."/>
            <person name="Rost R."/>
            <person name="Churcher C.M."/>
            <person name="Cooper J."/>
            <person name="Haydock S."/>
            <person name="van Driessche N."/>
            <person name="Cronin A."/>
            <person name="Goodhead I."/>
            <person name="Muzny D.M."/>
            <person name="Mourier T."/>
            <person name="Pain A."/>
            <person name="Lu M."/>
            <person name="Harper D."/>
            <person name="Lindsay R."/>
            <person name="Hauser H."/>
            <person name="James K.D."/>
            <person name="Quiles M."/>
            <person name="Madan Babu M."/>
            <person name="Saito T."/>
            <person name="Buchrieser C."/>
            <person name="Wardroper A."/>
            <person name="Felder M."/>
            <person name="Thangavelu M."/>
            <person name="Johnson D."/>
            <person name="Knights A."/>
            <person name="Loulseged H."/>
            <person name="Mungall K.L."/>
            <person name="Oliver K."/>
            <person name="Price C."/>
            <person name="Quail M.A."/>
            <person name="Urushihara H."/>
            <person name="Hernandez J."/>
            <person name="Rabbinowitsch E."/>
            <person name="Steffen D."/>
            <person name="Sanders M."/>
            <person name="Ma J."/>
            <person name="Kohara Y."/>
            <person name="Sharp S."/>
            <person name="Simmonds M.N."/>
            <person name="Spiegler S."/>
            <person name="Tivey A."/>
            <person name="Sugano S."/>
            <person name="White B."/>
            <person name="Walker D."/>
            <person name="Woodward J.R."/>
            <person name="Winckler T."/>
            <person name="Tanaka Y."/>
            <person name="Shaulsky G."/>
            <person name="Schleicher M."/>
            <person name="Weinstock G.M."/>
            <person name="Rosenthal A."/>
            <person name="Cox E.C."/>
            <person name="Chisholm R.L."/>
            <person name="Gibbs R.A."/>
            <person name="Loomis W.F."/>
            <person name="Platzer M."/>
            <person name="Kay R.R."/>
            <person name="Williams J.G."/>
            <person name="Dear P.H."/>
            <person name="Noegel A.A."/>
            <person name="Barrell B.G."/>
            <person name="Kuspa A."/>
        </authorList>
    </citation>
    <scope>NUCLEOTIDE SEQUENCE [LARGE SCALE GENOMIC DNA]</scope>
    <source>
        <strain>AX4</strain>
    </source>
</reference>
<reference key="2">
    <citation type="journal article" date="2006" name="J. Cell Sci.">
        <title>Functional genomics in Dictyostelium: midA, a new conserved protein, is required for mitochondrial function and development.</title>
        <authorList>
            <person name="Torija P."/>
            <person name="Vicente J.J."/>
            <person name="Rodrigues T.B."/>
            <person name="Robles A."/>
            <person name="Cerdan S."/>
            <person name="Sastre L."/>
            <person name="Calvo R.M."/>
            <person name="Escalante R."/>
        </authorList>
    </citation>
    <scope>DISRUPTION PHENOTYPE</scope>
</reference>
<accession>Q54RJ1</accession>
<organism>
    <name type="scientific">Dictyostelium discoideum</name>
    <name type="common">Social amoeba</name>
    <dbReference type="NCBI Taxonomy" id="44689"/>
    <lineage>
        <taxon>Eukaryota</taxon>
        <taxon>Amoebozoa</taxon>
        <taxon>Evosea</taxon>
        <taxon>Eumycetozoa</taxon>
        <taxon>Dictyostelia</taxon>
        <taxon>Dictyosteliales</taxon>
        <taxon>Dictyosteliaceae</taxon>
        <taxon>Dictyostelium</taxon>
    </lineage>
</organism>
<gene>
    <name type="primary">cnrB</name>
    <name type="ORF">DDB_G0283115</name>
</gene>